<sequence>MAATAAAVVAEEDTELRDLLVQTLENSGVLNRIKAELRAAVFLALEEQEKVENKTPLVNESLKKFLNTKDGRLVASLVAEFLQFFNLDFTLAVFQPETSTLQGLEGRENLARDLGIIEAEGTVGGPLLLEVIRRCQQKEKGPTTGEGALDLSDVHPPPKSPEGKTSAQTTPSKKANNEANQSDTSVSLSEPKSKSSLHLLSHETKIGSFLSNKTLDGKDKAGLCPDEDDMEGDSFFDDPIPKPEKTYGLRSEPRKQPGSLASLSDAPPLKSGLSSLAGAPSLKDSESKRGNTVLKDLKLISGKIGSLGLGTGEDDDYVDDFNSTSHRSEKSEISIGEEIEEDLSVEIDDINTSDKLDDLTQDLTVSQLSDVADYLEDVA</sequence>
<name>CEP43_MACFA</name>
<reference key="1">
    <citation type="submission" date="2005-06" db="EMBL/GenBank/DDBJ databases">
        <title>DNA sequences of macaque genes expressed in brain or testis and its evolutionary implications.</title>
        <authorList>
            <consortium name="International consortium for macaque cDNA sequencing and analysis"/>
        </authorList>
    </citation>
    <scope>NUCLEOTIDE SEQUENCE [LARGE SCALE MRNA]</scope>
    <source>
        <tissue>Testis</tissue>
    </source>
</reference>
<comment type="function">
    <text evidence="1">Required for anchoring microtubules to the centrosomes. Required for ciliation.</text>
</comment>
<comment type="subunit">
    <text evidence="1">Homodimer. Part of a ternary complex that contains CEP350, CEP43 and MAPRE1. Interacts directly with CEP350 and MAPRE1. Interacts with CEP19. Interacts (via N-terminus) with CEP350 (via C-terminus).</text>
</comment>
<comment type="subcellular location">
    <subcellularLocation>
        <location evidence="1">Cytoplasm</location>
        <location evidence="1">Cytoskeleton</location>
        <location evidence="1">Microtubule organizing center</location>
        <location evidence="1">Centrosome</location>
    </subcellularLocation>
    <subcellularLocation>
        <location evidence="1">Cytoplasm</location>
        <location evidence="1">Cytoskeleton</location>
        <location evidence="1">Microtubule organizing center</location>
        <location evidence="1">Centrosome</location>
        <location evidence="1">Centriole</location>
    </subcellularLocation>
    <subcellularLocation>
        <location evidence="1">Cytoplasm</location>
        <location evidence="1">Cytoskeleton</location>
        <location evidence="1">Cilium basal body</location>
    </subcellularLocation>
    <text evidence="1">Associated with gamma-tubulin. Localizes on both mother and daughter centrioles. Localizes to an axial position on the mother centriole. Localizes to the distal end of the centriole partly to the subdistal appendage region.</text>
</comment>
<comment type="similarity">
    <text evidence="5">Belongs to the CEP43 family.</text>
</comment>
<feature type="chain" id="PRO_0000233294" description="Centrosomal protein 43">
    <location>
        <begin position="1"/>
        <end position="379"/>
    </location>
</feature>
<feature type="domain" description="LisH" evidence="3">
    <location>
        <begin position="70"/>
        <end position="102"/>
    </location>
</feature>
<feature type="region of interest" description="Disordered" evidence="4">
    <location>
        <begin position="139"/>
        <end position="196"/>
    </location>
</feature>
<feature type="region of interest" description="Disordered" evidence="4">
    <location>
        <begin position="216"/>
        <end position="288"/>
    </location>
</feature>
<feature type="compositionally biased region" description="Polar residues" evidence="4">
    <location>
        <begin position="163"/>
        <end position="184"/>
    </location>
</feature>
<feature type="compositionally biased region" description="Low complexity" evidence="4">
    <location>
        <begin position="185"/>
        <end position="196"/>
    </location>
</feature>
<feature type="compositionally biased region" description="Acidic residues" evidence="4">
    <location>
        <begin position="225"/>
        <end position="236"/>
    </location>
</feature>
<feature type="compositionally biased region" description="Basic and acidic residues" evidence="4">
    <location>
        <begin position="239"/>
        <end position="255"/>
    </location>
</feature>
<feature type="compositionally biased region" description="Low complexity" evidence="4">
    <location>
        <begin position="266"/>
        <end position="282"/>
    </location>
</feature>
<feature type="modified residue" description="Phosphothreonine" evidence="1">
    <location>
        <position position="143"/>
    </location>
</feature>
<feature type="modified residue" description="Phosphoserine" evidence="1">
    <location>
        <position position="152"/>
    </location>
</feature>
<feature type="modified residue" description="Phosphoserine" evidence="1">
    <location>
        <position position="160"/>
    </location>
</feature>
<feature type="modified residue" description="Phosphothreonine" evidence="1">
    <location>
        <position position="170"/>
    </location>
</feature>
<feature type="modified residue" description="Phosphoserine" evidence="1">
    <location>
        <position position="182"/>
    </location>
</feature>
<feature type="modified residue" description="Phosphothreonine" evidence="1">
    <location>
        <position position="214"/>
    </location>
</feature>
<feature type="modified residue" description="Phosphoserine" evidence="1">
    <location>
        <position position="281"/>
    </location>
</feature>
<feature type="modified residue" description="Phosphoserine" evidence="1">
    <location>
        <position position="306"/>
    </location>
</feature>
<feature type="modified residue" description="Phosphotyrosine" evidence="2">
    <location>
        <position position="317"/>
    </location>
</feature>
<keyword id="KW-0966">Cell projection</keyword>
<keyword id="KW-0970">Cilium biogenesis/degradation</keyword>
<keyword id="KW-0963">Cytoplasm</keyword>
<keyword id="KW-0206">Cytoskeleton</keyword>
<keyword id="KW-0597">Phosphoprotein</keyword>
<keyword id="KW-1185">Reference proteome</keyword>
<organism>
    <name type="scientific">Macaca fascicularis</name>
    <name type="common">Crab-eating macaque</name>
    <name type="synonym">Cynomolgus monkey</name>
    <dbReference type="NCBI Taxonomy" id="9541"/>
    <lineage>
        <taxon>Eukaryota</taxon>
        <taxon>Metazoa</taxon>
        <taxon>Chordata</taxon>
        <taxon>Craniata</taxon>
        <taxon>Vertebrata</taxon>
        <taxon>Euteleostomi</taxon>
        <taxon>Mammalia</taxon>
        <taxon>Eutheria</taxon>
        <taxon>Euarchontoglires</taxon>
        <taxon>Primates</taxon>
        <taxon>Haplorrhini</taxon>
        <taxon>Catarrhini</taxon>
        <taxon>Cercopithecidae</taxon>
        <taxon>Cercopithecinae</taxon>
        <taxon>Macaca</taxon>
    </lineage>
</organism>
<accession>Q4R7V3</accession>
<proteinExistence type="evidence at transcript level"/>
<evidence type="ECO:0000250" key="1">
    <source>
        <dbReference type="UniProtKB" id="O95684"/>
    </source>
</evidence>
<evidence type="ECO:0000250" key="2">
    <source>
        <dbReference type="UniProtKB" id="Q66JX5"/>
    </source>
</evidence>
<evidence type="ECO:0000255" key="3">
    <source>
        <dbReference type="PROSITE-ProRule" id="PRU00126"/>
    </source>
</evidence>
<evidence type="ECO:0000256" key="4">
    <source>
        <dbReference type="SAM" id="MobiDB-lite"/>
    </source>
</evidence>
<evidence type="ECO:0000305" key="5"/>
<protein>
    <recommendedName>
        <fullName evidence="5">Centrosomal protein 43</fullName>
    </recommendedName>
    <alternativeName>
        <fullName>FGFR1 oncogene partner</fullName>
    </alternativeName>
</protein>
<gene>
    <name type="primary">CEP43</name>
    <name type="synonym">FGFR1OP</name>
    <name type="ORF">QtsA-14293</name>
</gene>
<dbReference type="EMBL" id="AB168708">
    <property type="protein sequence ID" value="BAE00819.1"/>
    <property type="molecule type" value="mRNA"/>
</dbReference>
<dbReference type="RefSeq" id="NP_001270441.1">
    <property type="nucleotide sequence ID" value="NM_001283512.1"/>
</dbReference>
<dbReference type="SMR" id="Q4R7V3"/>
<dbReference type="STRING" id="9541.ENSMFAP00000042806"/>
<dbReference type="eggNOG" id="ENOG502QR70">
    <property type="taxonomic scope" value="Eukaryota"/>
</dbReference>
<dbReference type="Proteomes" id="UP000233100">
    <property type="component" value="Unplaced"/>
</dbReference>
<dbReference type="GO" id="GO:0042995">
    <property type="term" value="C:cell projection"/>
    <property type="evidence" value="ECO:0007669"/>
    <property type="project" value="UniProtKB-KW"/>
</dbReference>
<dbReference type="GO" id="GO:0005814">
    <property type="term" value="C:centriole"/>
    <property type="evidence" value="ECO:0007669"/>
    <property type="project" value="UniProtKB-SubCell"/>
</dbReference>
<dbReference type="GO" id="GO:0005813">
    <property type="term" value="C:centrosome"/>
    <property type="evidence" value="ECO:0007669"/>
    <property type="project" value="UniProtKB-SubCell"/>
</dbReference>
<dbReference type="GO" id="GO:0005737">
    <property type="term" value="C:cytoplasm"/>
    <property type="evidence" value="ECO:0007669"/>
    <property type="project" value="UniProtKB-KW"/>
</dbReference>
<dbReference type="GO" id="GO:0030030">
    <property type="term" value="P:cell projection organization"/>
    <property type="evidence" value="ECO:0007669"/>
    <property type="project" value="UniProtKB-KW"/>
</dbReference>
<dbReference type="GO" id="GO:0034453">
    <property type="term" value="P:microtubule anchoring"/>
    <property type="evidence" value="ECO:0007669"/>
    <property type="project" value="InterPro"/>
</dbReference>
<dbReference type="FunFam" id="1.20.960.40:FF:000001">
    <property type="entry name" value="FGFR1 oncogene partner"/>
    <property type="match status" value="1"/>
</dbReference>
<dbReference type="Gene3D" id="1.20.960.40">
    <property type="match status" value="1"/>
</dbReference>
<dbReference type="InterPro" id="IPR018993">
    <property type="entry name" value="FOP_dimerisation-dom_N"/>
</dbReference>
<dbReference type="InterPro" id="IPR006594">
    <property type="entry name" value="LisH"/>
</dbReference>
<dbReference type="PANTHER" id="PTHR15431:SF9">
    <property type="entry name" value="CENTROSOMAL PROTEIN 43"/>
    <property type="match status" value="1"/>
</dbReference>
<dbReference type="PANTHER" id="PTHR15431">
    <property type="entry name" value="FGFR1 ONCOGENE PARTNER/LISH DOMAIN-CONTAINING PROTEIN"/>
    <property type="match status" value="1"/>
</dbReference>
<dbReference type="Pfam" id="PF09398">
    <property type="entry name" value="FOP_dimer"/>
    <property type="match status" value="1"/>
</dbReference>
<dbReference type="PROSITE" id="PS50896">
    <property type="entry name" value="LISH"/>
    <property type="match status" value="1"/>
</dbReference>